<gene>
    <name type="ordered locus">PEPE_0134</name>
</gene>
<sequence length="384" mass="42082">MTIEPLNLVRIRRQFHESPELALKEFQTHALLLSVIRSLPQNLLEIKTIPELPTALLVRVAGSHPHRTIGYRADIDALPVNEKTGLDFASKTPGIMHACGHDIHMTVALGILEYFANHQPQDNLIFFFQPAEESHSGSVRAFNANIFTNQFRPNEFYGLHSTPTLPAGVIGCRMGTLFAGTTEVNLKLTGKGGHAAYPQDANDMVVAQAYLITQLQTIVARNVNPIEGGVLTLGKVSAGNVRNVIADQAVIEGTIRGLTQKMILLIQQRVQQICEGTAQAFNCQVEVKMNQGGYLPVENDPTLTHELIQFMQSDSAIKFKKTPPAMTGEDFGFLLSKFPGTMFWLGVGATSSLHSATFNPDERAIQLGIDAVIKFLQNRMSKGA</sequence>
<organism>
    <name type="scientific">Pediococcus pentosaceus (strain ATCC 25745 / CCUG 21536 / LMG 10740 / 183-1w)</name>
    <dbReference type="NCBI Taxonomy" id="278197"/>
    <lineage>
        <taxon>Bacteria</taxon>
        <taxon>Bacillati</taxon>
        <taxon>Bacillota</taxon>
        <taxon>Bacilli</taxon>
        <taxon>Lactobacillales</taxon>
        <taxon>Lactobacillaceae</taxon>
        <taxon>Pediococcus</taxon>
    </lineage>
</organism>
<accession>Q03HT1</accession>
<protein>
    <recommendedName>
        <fullName evidence="1">N-acetyldiaminopimelate deacetylase</fullName>
        <ecNumber evidence="1">3.5.1.47</ecNumber>
    </recommendedName>
</protein>
<comment type="function">
    <text evidence="1">Catalyzes the conversion of N-acetyl-diaminopimelate to diaminopimelate and acetate.</text>
</comment>
<comment type="catalytic activity">
    <reaction evidence="1">
        <text>N-acetyl-(2S,6S)-2,6-diaminopimelate + H2O = (2S,6S)-2,6-diaminopimelate + acetate</text>
        <dbReference type="Rhea" id="RHEA:20405"/>
        <dbReference type="ChEBI" id="CHEBI:15377"/>
        <dbReference type="ChEBI" id="CHEBI:30089"/>
        <dbReference type="ChEBI" id="CHEBI:57609"/>
        <dbReference type="ChEBI" id="CHEBI:58767"/>
        <dbReference type="EC" id="3.5.1.47"/>
    </reaction>
</comment>
<comment type="pathway">
    <text evidence="1">Amino-acid biosynthesis; L-lysine biosynthesis via DAP pathway; LL-2,6-diaminopimelate from (S)-tetrahydrodipicolinate (acetylase route): step 3/3.</text>
</comment>
<comment type="similarity">
    <text evidence="1">Belongs to the peptidase M20A family. N-acetyldiaminopimelate deacetylase subfamily.</text>
</comment>
<keyword id="KW-0028">Amino-acid biosynthesis</keyword>
<keyword id="KW-0220">Diaminopimelate biosynthesis</keyword>
<keyword id="KW-0378">Hydrolase</keyword>
<keyword id="KW-0457">Lysine biosynthesis</keyword>
<proteinExistence type="inferred from homology"/>
<feature type="chain" id="PRO_0000376779" description="N-acetyldiaminopimelate deacetylase">
    <location>
        <begin position="1"/>
        <end position="384"/>
    </location>
</feature>
<feature type="active site" evidence="1">
    <location>
        <position position="74"/>
    </location>
</feature>
<feature type="active site" description="Proton acceptor" evidence="1">
    <location>
        <position position="133"/>
    </location>
</feature>
<evidence type="ECO:0000255" key="1">
    <source>
        <dbReference type="HAMAP-Rule" id="MF_01692"/>
    </source>
</evidence>
<dbReference type="EC" id="3.5.1.47" evidence="1"/>
<dbReference type="EMBL" id="CP000422">
    <property type="protein sequence ID" value="ABJ67241.1"/>
    <property type="molecule type" value="Genomic_DNA"/>
</dbReference>
<dbReference type="RefSeq" id="WP_011672865.1">
    <property type="nucleotide sequence ID" value="NC_008525.1"/>
</dbReference>
<dbReference type="SMR" id="Q03HT1"/>
<dbReference type="STRING" id="278197.PEPE_0134"/>
<dbReference type="GeneID" id="33062061"/>
<dbReference type="KEGG" id="ppe:PEPE_0134"/>
<dbReference type="eggNOG" id="COG1473">
    <property type="taxonomic scope" value="Bacteria"/>
</dbReference>
<dbReference type="HOGENOM" id="CLU_023257_0_1_9"/>
<dbReference type="OrthoDB" id="9776731at2"/>
<dbReference type="UniPathway" id="UPA00034">
    <property type="reaction ID" value="UER00024"/>
</dbReference>
<dbReference type="Proteomes" id="UP000000773">
    <property type="component" value="Chromosome"/>
</dbReference>
<dbReference type="GO" id="GO:0050118">
    <property type="term" value="F:N-acetyldiaminopimelate deacetylase activity"/>
    <property type="evidence" value="ECO:0007669"/>
    <property type="project" value="UniProtKB-UniRule"/>
</dbReference>
<dbReference type="GO" id="GO:0019877">
    <property type="term" value="P:diaminopimelate biosynthetic process"/>
    <property type="evidence" value="ECO:0007669"/>
    <property type="project" value="UniProtKB-UniRule"/>
</dbReference>
<dbReference type="GO" id="GO:0009089">
    <property type="term" value="P:lysine biosynthetic process via diaminopimelate"/>
    <property type="evidence" value="ECO:0007669"/>
    <property type="project" value="UniProtKB-UniRule"/>
</dbReference>
<dbReference type="CDD" id="cd05670">
    <property type="entry name" value="M20_Acy1_YkuR-like"/>
    <property type="match status" value="1"/>
</dbReference>
<dbReference type="FunFam" id="3.30.70.360:FF:000001">
    <property type="entry name" value="N-acetyldiaminopimelate deacetylase"/>
    <property type="match status" value="1"/>
</dbReference>
<dbReference type="Gene3D" id="3.30.70.360">
    <property type="match status" value="1"/>
</dbReference>
<dbReference type="Gene3D" id="3.40.630.10">
    <property type="entry name" value="Zn peptidases"/>
    <property type="match status" value="1"/>
</dbReference>
<dbReference type="HAMAP" id="MF_01692">
    <property type="entry name" value="DapEL"/>
    <property type="match status" value="1"/>
</dbReference>
<dbReference type="InterPro" id="IPR023905">
    <property type="entry name" value="AcetylDAP_deacetylase"/>
</dbReference>
<dbReference type="InterPro" id="IPR017439">
    <property type="entry name" value="Amidohydrolase"/>
</dbReference>
<dbReference type="InterPro" id="IPR036264">
    <property type="entry name" value="Bact_exopeptidase_dim_dom"/>
</dbReference>
<dbReference type="InterPro" id="IPR002933">
    <property type="entry name" value="Peptidase_M20"/>
</dbReference>
<dbReference type="InterPro" id="IPR011650">
    <property type="entry name" value="Peptidase_M20_dimer"/>
</dbReference>
<dbReference type="NCBIfam" id="TIGR01891">
    <property type="entry name" value="amidohydrolases"/>
    <property type="match status" value="1"/>
</dbReference>
<dbReference type="PANTHER" id="PTHR11014:SF98">
    <property type="entry name" value="N-ACETYLDIAMINOPIMELATE DEACETYLASE"/>
    <property type="match status" value="1"/>
</dbReference>
<dbReference type="PANTHER" id="PTHR11014">
    <property type="entry name" value="PEPTIDASE M20 FAMILY MEMBER"/>
    <property type="match status" value="1"/>
</dbReference>
<dbReference type="Pfam" id="PF07687">
    <property type="entry name" value="M20_dimer"/>
    <property type="match status" value="1"/>
</dbReference>
<dbReference type="Pfam" id="PF01546">
    <property type="entry name" value="Peptidase_M20"/>
    <property type="match status" value="1"/>
</dbReference>
<dbReference type="PIRSF" id="PIRSF005962">
    <property type="entry name" value="Pept_M20D_amidohydro"/>
    <property type="match status" value="1"/>
</dbReference>
<dbReference type="SUPFAM" id="SSF55031">
    <property type="entry name" value="Bacterial exopeptidase dimerisation domain"/>
    <property type="match status" value="1"/>
</dbReference>
<dbReference type="SUPFAM" id="SSF53187">
    <property type="entry name" value="Zn-dependent exopeptidases"/>
    <property type="match status" value="1"/>
</dbReference>
<reference key="1">
    <citation type="journal article" date="2006" name="Proc. Natl. Acad. Sci. U.S.A.">
        <title>Comparative genomics of the lactic acid bacteria.</title>
        <authorList>
            <person name="Makarova K.S."/>
            <person name="Slesarev A."/>
            <person name="Wolf Y.I."/>
            <person name="Sorokin A."/>
            <person name="Mirkin B."/>
            <person name="Koonin E.V."/>
            <person name="Pavlov A."/>
            <person name="Pavlova N."/>
            <person name="Karamychev V."/>
            <person name="Polouchine N."/>
            <person name="Shakhova V."/>
            <person name="Grigoriev I."/>
            <person name="Lou Y."/>
            <person name="Rohksar D."/>
            <person name="Lucas S."/>
            <person name="Huang K."/>
            <person name="Goodstein D.M."/>
            <person name="Hawkins T."/>
            <person name="Plengvidhya V."/>
            <person name="Welker D."/>
            <person name="Hughes J."/>
            <person name="Goh Y."/>
            <person name="Benson A."/>
            <person name="Baldwin K."/>
            <person name="Lee J.-H."/>
            <person name="Diaz-Muniz I."/>
            <person name="Dosti B."/>
            <person name="Smeianov V."/>
            <person name="Wechter W."/>
            <person name="Barabote R."/>
            <person name="Lorca G."/>
            <person name="Altermann E."/>
            <person name="Barrangou R."/>
            <person name="Ganesan B."/>
            <person name="Xie Y."/>
            <person name="Rawsthorne H."/>
            <person name="Tamir D."/>
            <person name="Parker C."/>
            <person name="Breidt F."/>
            <person name="Broadbent J.R."/>
            <person name="Hutkins R."/>
            <person name="O'Sullivan D."/>
            <person name="Steele J."/>
            <person name="Unlu G."/>
            <person name="Saier M.H. Jr."/>
            <person name="Klaenhammer T."/>
            <person name="Richardson P."/>
            <person name="Kozyavkin S."/>
            <person name="Weimer B.C."/>
            <person name="Mills D.A."/>
        </authorList>
    </citation>
    <scope>NUCLEOTIDE SEQUENCE [LARGE SCALE GENOMIC DNA]</scope>
    <source>
        <strain>ATCC 25745 / CCUG 21536 / LMG 10740 / 183-1w</strain>
    </source>
</reference>
<name>DAPEL_PEDPA</name>